<keyword id="KW-0378">Hydrolase</keyword>
<keyword id="KW-1185">Reference proteome</keyword>
<reference key="1">
    <citation type="journal article" date="2007" name="Nature">
        <title>Evolution of genes and genomes on the Drosophila phylogeny.</title>
        <authorList>
            <consortium name="Drosophila 12 genomes consortium"/>
        </authorList>
    </citation>
    <scope>NUCLEOTIDE SEQUENCE [LARGE SCALE GENOMIC DNA]</scope>
    <source>
        <strain>Tucson 15081-1352.22</strain>
    </source>
</reference>
<accession>B4KPY6</accession>
<proteinExistence type="inferred from homology"/>
<dbReference type="EC" id="3.5.1.122" evidence="2"/>
<dbReference type="EMBL" id="CH933808">
    <property type="protein sequence ID" value="EDW08088.1"/>
    <property type="molecule type" value="Genomic_DNA"/>
</dbReference>
<dbReference type="SMR" id="B4KPY6"/>
<dbReference type="FunCoup" id="B4KPY6">
    <property type="interactions" value="1480"/>
</dbReference>
<dbReference type="EnsemblMetazoa" id="FBtr0170480">
    <property type="protein sequence ID" value="FBpp0168972"/>
    <property type="gene ID" value="FBgn0142492"/>
</dbReference>
<dbReference type="EnsemblMetazoa" id="FBtr0427481">
    <property type="protein sequence ID" value="FBpp0385095"/>
    <property type="gene ID" value="FBgn0142492"/>
</dbReference>
<dbReference type="EnsemblMetazoa" id="XM_002004117.4">
    <property type="protein sequence ID" value="XP_002004153.1"/>
    <property type="gene ID" value="LOC6581195"/>
</dbReference>
<dbReference type="EnsemblMetazoa" id="XM_015163011.3">
    <property type="protein sequence ID" value="XP_015018497.1"/>
    <property type="gene ID" value="LOC6581195"/>
</dbReference>
<dbReference type="EnsemblMetazoa" id="XM_032730053.2">
    <property type="protein sequence ID" value="XP_032585944.1"/>
    <property type="gene ID" value="LOC6581195"/>
</dbReference>
<dbReference type="EnsemblMetazoa" id="XM_044010703.1">
    <property type="protein sequence ID" value="XP_043866638.1"/>
    <property type="gene ID" value="LOC6581195"/>
</dbReference>
<dbReference type="EnsemblMetazoa" id="XM_044010704.1">
    <property type="protein sequence ID" value="XP_043866639.1"/>
    <property type="gene ID" value="LOC6581195"/>
</dbReference>
<dbReference type="GeneID" id="6581195"/>
<dbReference type="KEGG" id="dmo:Dmoj_GI19755"/>
<dbReference type="CTD" id="36743"/>
<dbReference type="eggNOG" id="KOG3261">
    <property type="taxonomic scope" value="Eukaryota"/>
</dbReference>
<dbReference type="HOGENOM" id="CLU_091083_1_0_1"/>
<dbReference type="InParanoid" id="B4KPY6"/>
<dbReference type="OMA" id="GWGTVYS"/>
<dbReference type="OrthoDB" id="191192at2759"/>
<dbReference type="PhylomeDB" id="B4KPY6"/>
<dbReference type="ChiTaRS" id="Zasp52">
    <property type="organism name" value="fly"/>
</dbReference>
<dbReference type="Proteomes" id="UP000009192">
    <property type="component" value="Unassembled WGS sequence"/>
</dbReference>
<dbReference type="GO" id="GO:0005829">
    <property type="term" value="C:cytosol"/>
    <property type="evidence" value="ECO:0007669"/>
    <property type="project" value="TreeGrafter"/>
</dbReference>
<dbReference type="GO" id="GO:0005634">
    <property type="term" value="C:nucleus"/>
    <property type="evidence" value="ECO:0007669"/>
    <property type="project" value="TreeGrafter"/>
</dbReference>
<dbReference type="GO" id="GO:0008418">
    <property type="term" value="F:protein-N-terminal asparagine amidohydrolase activity"/>
    <property type="evidence" value="ECO:0007669"/>
    <property type="project" value="InterPro"/>
</dbReference>
<dbReference type="GO" id="GO:0070773">
    <property type="term" value="F:protein-N-terminal glutamine amidohydrolase activity"/>
    <property type="evidence" value="ECO:0007669"/>
    <property type="project" value="UniProtKB-EC"/>
</dbReference>
<dbReference type="FunFam" id="3.10.620.10:FF:000001">
    <property type="entry name" value="Blast:Protein N-terminal glutamine amidohydrolase"/>
    <property type="match status" value="1"/>
</dbReference>
<dbReference type="Gene3D" id="3.10.620.10">
    <property type="entry name" value="Protein N-terminal glutamine amidohydrolase, alpha beta roll"/>
    <property type="match status" value="1"/>
</dbReference>
<dbReference type="InterPro" id="IPR037132">
    <property type="entry name" value="N_Gln_amidohydro_ab_roll_sf"/>
</dbReference>
<dbReference type="InterPro" id="IPR039733">
    <property type="entry name" value="NTAQ1"/>
</dbReference>
<dbReference type="InterPro" id="IPR023128">
    <property type="entry name" value="Prot_N_Gln_amidohydro_ab_roll"/>
</dbReference>
<dbReference type="PANTHER" id="PTHR13035">
    <property type="entry name" value="PROTEIN N-TERMINAL GLUTAMINE AMIDOHYDROLASE"/>
    <property type="match status" value="1"/>
</dbReference>
<dbReference type="PANTHER" id="PTHR13035:SF0">
    <property type="entry name" value="PROTEIN N-TERMINAL GLUTAMINE AMIDOHYDROLASE"/>
    <property type="match status" value="1"/>
</dbReference>
<dbReference type="Pfam" id="PF09764">
    <property type="entry name" value="Nt_Gln_amidase"/>
    <property type="match status" value="1"/>
</dbReference>
<protein>
    <recommendedName>
        <fullName>Protein N-terminal glutamine amidohydrolase</fullName>
        <ecNumber evidence="2">3.5.1.122</ecNumber>
    </recommendedName>
    <alternativeName>
        <fullName>Protein NH2-terminal glutamine deamidase</fullName>
        <shortName>N-terminal Gln amidase</shortName>
        <shortName>Nt(Q)-amidase</shortName>
    </alternativeName>
    <alternativeName>
        <fullName>Protein tungus</fullName>
    </alternativeName>
</protein>
<evidence type="ECO:0000250" key="1"/>
<evidence type="ECO:0000250" key="2">
    <source>
        <dbReference type="UniProtKB" id="Q80WB5"/>
    </source>
</evidence>
<evidence type="ECO:0000250" key="3">
    <source>
        <dbReference type="UniProtKB" id="Q96HA8"/>
    </source>
</evidence>
<evidence type="ECO:0000305" key="4"/>
<name>NTAQ1_DROMO</name>
<sequence length="205" mass="24016">MATDFLFPKIADCSYVSCYCEENVWKLCEQVQRTRPEELSKCYAVFVSNEGRTVPLWRQKAGRGDDQVVIWDYHVFFMHNPLPNRCLVYDLDTTLPFPTYFHKYVTETFRSDLALRPEHHRFFRVIPADTYLIEFSSDRRHMRRPDGSWIKPPPSYPPILSNTNMHCLGDFICMSAGKGPGAVYSLSEFVQYFYKSPHVVAQHNK</sequence>
<gene>
    <name type="primary">tun</name>
    <name type="ORF">GI19755</name>
</gene>
<feature type="chain" id="PRO_0000381827" description="Protein N-terminal glutamine amidohydrolase">
    <location>
        <begin position="1"/>
        <end position="205"/>
    </location>
</feature>
<feature type="active site" evidence="1">
    <location>
        <position position="20"/>
    </location>
</feature>
<feature type="active site" evidence="1">
    <location>
        <position position="74"/>
    </location>
</feature>
<feature type="active site" evidence="1">
    <location>
        <position position="90"/>
    </location>
</feature>
<organism>
    <name type="scientific">Drosophila mojavensis</name>
    <name type="common">Fruit fly</name>
    <dbReference type="NCBI Taxonomy" id="7230"/>
    <lineage>
        <taxon>Eukaryota</taxon>
        <taxon>Metazoa</taxon>
        <taxon>Ecdysozoa</taxon>
        <taxon>Arthropoda</taxon>
        <taxon>Hexapoda</taxon>
        <taxon>Insecta</taxon>
        <taxon>Pterygota</taxon>
        <taxon>Neoptera</taxon>
        <taxon>Endopterygota</taxon>
        <taxon>Diptera</taxon>
        <taxon>Brachycera</taxon>
        <taxon>Muscomorpha</taxon>
        <taxon>Ephydroidea</taxon>
        <taxon>Drosophilidae</taxon>
        <taxon>Drosophila</taxon>
    </lineage>
</organism>
<comment type="function">
    <text evidence="2">Mediates the side-chain deamidation of N-terminal glutamine residues to glutamate, an important step in N-end rule pathway of protein degradation. Conversion of the resulting N-terminal glutamine to glutamate renders the protein susceptible to arginylation, polyubiquitination and degradation as specified by the N-end rule. Does not act on substrates with internal or C-terminal glutamine and does not act on non-glutamine residues in any position.</text>
</comment>
<comment type="catalytic activity">
    <reaction evidence="2">
        <text>N-terminal L-glutaminyl-[protein] + H2O = N-terminal L-glutamyl-[protein] + NH4(+)</text>
        <dbReference type="Rhea" id="RHEA:50680"/>
        <dbReference type="Rhea" id="RHEA-COMP:12668"/>
        <dbReference type="Rhea" id="RHEA-COMP:12777"/>
        <dbReference type="ChEBI" id="CHEBI:15377"/>
        <dbReference type="ChEBI" id="CHEBI:28938"/>
        <dbReference type="ChEBI" id="CHEBI:64721"/>
        <dbReference type="ChEBI" id="CHEBI:64722"/>
        <dbReference type="EC" id="3.5.1.122"/>
    </reaction>
</comment>
<comment type="subunit">
    <text evidence="3">Monomer.</text>
</comment>
<comment type="similarity">
    <text evidence="4">Belongs to the NTAQ1 family.</text>
</comment>